<organism>
    <name type="scientific">Archaeoglobus fulgidus (strain ATCC 49558 / DSM 4304 / JCM 9628 / NBRC 100126 / VC-16)</name>
    <dbReference type="NCBI Taxonomy" id="224325"/>
    <lineage>
        <taxon>Archaea</taxon>
        <taxon>Methanobacteriati</taxon>
        <taxon>Methanobacteriota</taxon>
        <taxon>Archaeoglobi</taxon>
        <taxon>Archaeoglobales</taxon>
        <taxon>Archaeoglobaceae</taxon>
        <taxon>Archaeoglobus</taxon>
    </lineage>
</organism>
<protein>
    <recommendedName>
        <fullName>Uncharacterized protein AF_2239</fullName>
    </recommendedName>
</protein>
<dbReference type="EMBL" id="AE000782">
    <property type="protein sequence ID" value="AAB89018.1"/>
    <property type="molecule type" value="Genomic_DNA"/>
</dbReference>
<dbReference type="PIR" id="G69529">
    <property type="entry name" value="G69529"/>
</dbReference>
<dbReference type="RefSeq" id="WP_010879728.1">
    <property type="nucleotide sequence ID" value="NC_000917.1"/>
</dbReference>
<dbReference type="SMR" id="O28044"/>
<dbReference type="PaxDb" id="224325-AF_2239"/>
<dbReference type="DNASU" id="1485470"/>
<dbReference type="EnsemblBacteria" id="AAB89018">
    <property type="protein sequence ID" value="AAB89018"/>
    <property type="gene ID" value="AF_2239"/>
</dbReference>
<dbReference type="KEGG" id="afu:AF_2239"/>
<dbReference type="eggNOG" id="arCOG10397">
    <property type="taxonomic scope" value="Archaea"/>
</dbReference>
<dbReference type="HOGENOM" id="CLU_069529_0_0_2"/>
<dbReference type="OrthoDB" id="51670at2157"/>
<dbReference type="Proteomes" id="UP000002199">
    <property type="component" value="Chromosome"/>
</dbReference>
<dbReference type="GO" id="GO:0005886">
    <property type="term" value="C:plasma membrane"/>
    <property type="evidence" value="ECO:0007669"/>
    <property type="project" value="UniProtKB-SubCell"/>
</dbReference>
<reference key="1">
    <citation type="journal article" date="1997" name="Nature">
        <title>The complete genome sequence of the hyperthermophilic, sulphate-reducing archaeon Archaeoglobus fulgidus.</title>
        <authorList>
            <person name="Klenk H.-P."/>
            <person name="Clayton R.A."/>
            <person name="Tomb J.-F."/>
            <person name="White O."/>
            <person name="Nelson K.E."/>
            <person name="Ketchum K.A."/>
            <person name="Dodson R.J."/>
            <person name="Gwinn M.L."/>
            <person name="Hickey E.K."/>
            <person name="Peterson J.D."/>
            <person name="Richardson D.L."/>
            <person name="Kerlavage A.R."/>
            <person name="Graham D.E."/>
            <person name="Kyrpides N.C."/>
            <person name="Fleischmann R.D."/>
            <person name="Quackenbush J."/>
            <person name="Lee N.H."/>
            <person name="Sutton G.G."/>
            <person name="Gill S.R."/>
            <person name="Kirkness E.F."/>
            <person name="Dougherty B.A."/>
            <person name="McKenney K."/>
            <person name="Adams M.D."/>
            <person name="Loftus B.J."/>
            <person name="Peterson S.N."/>
            <person name="Reich C.I."/>
            <person name="McNeil L.K."/>
            <person name="Badger J.H."/>
            <person name="Glodek A."/>
            <person name="Zhou L."/>
            <person name="Overbeek R."/>
            <person name="Gocayne J.D."/>
            <person name="Weidman J.F."/>
            <person name="McDonald L.A."/>
            <person name="Utterback T.R."/>
            <person name="Cotton M.D."/>
            <person name="Spriggs T."/>
            <person name="Artiach P."/>
            <person name="Kaine B.P."/>
            <person name="Sykes S.M."/>
            <person name="Sadow P.W."/>
            <person name="D'Andrea K.P."/>
            <person name="Bowman C."/>
            <person name="Fujii C."/>
            <person name="Garland S.A."/>
            <person name="Mason T.M."/>
            <person name="Olsen G.J."/>
            <person name="Fraser C.M."/>
            <person name="Smith H.O."/>
            <person name="Woese C.R."/>
            <person name="Venter J.C."/>
        </authorList>
    </citation>
    <scope>NUCLEOTIDE SEQUENCE [LARGE SCALE GENOMIC DNA]</scope>
    <source>
        <strain>ATCC 49558 / DSM 4304 / JCM 9628 / NBRC 100126 / VC-16</strain>
    </source>
</reference>
<evidence type="ECO:0000255" key="1"/>
<evidence type="ECO:0000305" key="2"/>
<gene>
    <name type="ordered locus">AF_2239</name>
</gene>
<sequence>MRYAIFDESNLERVLKAIGEASPEFRRFRYVELLAKSEKGVVGKYRSLYFLFSKEPFELDVEPIEIFEVEIEKDDGNFRSFRFGKYSLRDKLLLDCNFNEKLFYDYLPALLCEISSARLLIKDCNLRASHLAERESEIVKEITKISEDVKTLSIEKLEELSFEVSALRASFFSSYMLFKDDVEEIFSSIARASSISNFLGGLLKEQIDELRNQLETISYFESRFEQTLSGVRDALDVVHLRLEMLRGKENLELQKRTSALQAAAAVIEFVAVFYYSMKIWEAFLPVTEMPHWLSFSLLAAFTFTVVVYTEALGDYIRERKPSSKLVLLTLTLAILVILMATLPTLFSAASQLSGGH</sequence>
<name>Y2239_ARCFU</name>
<accession>O28044</accession>
<proteinExistence type="predicted"/>
<comment type="subcellular location">
    <subcellularLocation>
        <location evidence="2">Cell membrane</location>
        <topology evidence="2">Multi-pass membrane protein</topology>
    </subcellularLocation>
</comment>
<feature type="chain" id="PRO_0000128127" description="Uncharacterized protein AF_2239">
    <location>
        <begin position="1"/>
        <end position="356"/>
    </location>
</feature>
<feature type="transmembrane region" description="Helical" evidence="1">
    <location>
        <begin position="258"/>
        <end position="275"/>
    </location>
</feature>
<feature type="transmembrane region" description="Helical" evidence="1">
    <location>
        <begin position="290"/>
        <end position="312"/>
    </location>
</feature>
<feature type="transmembrane region" description="Helical" evidence="1">
    <location>
        <begin position="325"/>
        <end position="347"/>
    </location>
</feature>
<keyword id="KW-1003">Cell membrane</keyword>
<keyword id="KW-0472">Membrane</keyword>
<keyword id="KW-1185">Reference proteome</keyword>
<keyword id="KW-0812">Transmembrane</keyword>
<keyword id="KW-1133">Transmembrane helix</keyword>